<feature type="chain" id="PRO_0000395710" description="E3 ubiquitin-protein ligase RSP5">
    <location>
        <begin position="1"/>
        <end position="821"/>
    </location>
</feature>
<feature type="domain" description="C2" evidence="2">
    <location>
        <begin position="1"/>
        <end position="112"/>
    </location>
</feature>
<feature type="domain" description="WW 1" evidence="4">
    <location>
        <begin position="231"/>
        <end position="264"/>
    </location>
</feature>
<feature type="domain" description="WW 2" evidence="4">
    <location>
        <begin position="339"/>
        <end position="372"/>
    </location>
</feature>
<feature type="domain" description="WW 3" evidence="4">
    <location>
        <begin position="399"/>
        <end position="432"/>
    </location>
</feature>
<feature type="domain" description="HECT" evidence="3">
    <location>
        <begin position="488"/>
        <end position="821"/>
    </location>
</feature>
<feature type="region of interest" description="Disordered" evidence="5">
    <location>
        <begin position="133"/>
        <end position="239"/>
    </location>
</feature>
<feature type="region of interest" description="Disordered" evidence="5">
    <location>
        <begin position="255"/>
        <end position="359"/>
    </location>
</feature>
<feature type="compositionally biased region" description="Polar residues" evidence="5">
    <location>
        <begin position="133"/>
        <end position="144"/>
    </location>
</feature>
<feature type="compositionally biased region" description="Polar residues" evidence="5">
    <location>
        <begin position="188"/>
        <end position="201"/>
    </location>
</feature>
<feature type="compositionally biased region" description="Low complexity" evidence="5">
    <location>
        <begin position="202"/>
        <end position="217"/>
    </location>
</feature>
<feature type="compositionally biased region" description="Polar residues" evidence="5">
    <location>
        <begin position="255"/>
        <end position="272"/>
    </location>
</feature>
<feature type="compositionally biased region" description="Basic and acidic residues" evidence="5">
    <location>
        <begin position="281"/>
        <end position="296"/>
    </location>
</feature>
<feature type="compositionally biased region" description="Polar residues" evidence="5">
    <location>
        <begin position="297"/>
        <end position="312"/>
    </location>
</feature>
<feature type="compositionally biased region" description="Low complexity" evidence="5">
    <location>
        <begin position="320"/>
        <end position="339"/>
    </location>
</feature>
<feature type="active site" description="Glycyl thioester intermediate" evidence="3">
    <location>
        <position position="789"/>
    </location>
</feature>
<proteinExistence type="evidence at protein level"/>
<sequence length="821" mass="92844">MGSNLPAQPNLRVTIIAADGLYKRDVFRLPDPFAVATVGGEQTHTTSVIKKTLNPYWNEMFDLRVNEDSILAIQIFDQKKFKKKDQGFLGVINVRIGDVIDLQMGGDEMLTRDLKKSNDNLVVHGKLIINLSTNLSTPNPNQANGLHRTQLGASTSSGLVPQVAPTPSVPQAGPSSVDQSAAASSASLNPQRVPSATRPTSQIAPPNGAPPIANGQGVPRPNLSSFEDNQGRLPAGWERREDNLGRTYYVDHNTRTTTWNRPSANYNEQTQRTQREANMQLERRAHQNRMLPEDRTGASSPNLSETQPQAQTPPAGGSGASNSNVVSMMATGATTAGTGELPPGWEQRTTPEGRPYFVDHNTRTTTWVDPRRQQYIRMYGQNASGGNTTIQQQPVSQLGPLPSGWEMRLTNTARVYFVDHNTKTTTWDDPRLPSSLDQGVPQYKRDFRRKLIYFRSQPALRIMSGQCHVKVRRNNIFEDSYAEIMRQSASDLKKRLMIKFDGEDGLDYGGLSREFFFLLSHEMFNPFYCLFEYSAHDNYTLQINPHSGVNPEHLNYFKFIGRVVGLAIFHRRFLDSFFIGAFYKMMLRKKVSLQDMEGVDEDLHRNLTWTLENDIEGIIDLTFTVDDEKFGERRTIELKPGGEDIPVTNENKHEYVELVTEWKIVKRVEEQFNAFMSGFNELIPADLVNVFDERELELLIGGIADIDVDDWKKHTDYRGYQEQDEVIQNFWKIVRTWDAEQKSRLLQFTTGTSRIPVNGFKDLQGSDGPRRFTIEKSGDPIALPKSHTCFNRLDLPPYKSHEVLEHKLSIAVEETLGFGQE</sequence>
<name>RSP5_EMENI</name>
<dbReference type="EC" id="2.3.2.26"/>
<dbReference type="EMBL" id="AACD01000018">
    <property type="protein sequence ID" value="EAA65522.1"/>
    <property type="molecule type" value="Genomic_DNA"/>
</dbReference>
<dbReference type="EMBL" id="BN001308">
    <property type="protein sequence ID" value="CBF87687.1"/>
    <property type="molecule type" value="Genomic_DNA"/>
</dbReference>
<dbReference type="RefSeq" id="XP_658943.1">
    <property type="nucleotide sequence ID" value="XM_653851.1"/>
</dbReference>
<dbReference type="SMR" id="Q5BDP1"/>
<dbReference type="FunCoup" id="Q5BDP1">
    <property type="interactions" value="575"/>
</dbReference>
<dbReference type="STRING" id="227321.Q5BDP1"/>
<dbReference type="EnsemblFungi" id="CBF87687">
    <property type="protein sequence ID" value="CBF87687"/>
    <property type="gene ID" value="ANIA_01339"/>
</dbReference>
<dbReference type="KEGG" id="ani:ANIA_01339"/>
<dbReference type="VEuPathDB" id="FungiDB:AN1339"/>
<dbReference type="eggNOG" id="KOG0940">
    <property type="taxonomic scope" value="Eukaryota"/>
</dbReference>
<dbReference type="HOGENOM" id="CLU_002173_0_0_1"/>
<dbReference type="InParanoid" id="Q5BDP1"/>
<dbReference type="OMA" id="WKRPTLD"/>
<dbReference type="OrthoDB" id="8068875at2759"/>
<dbReference type="UniPathway" id="UPA00143"/>
<dbReference type="Proteomes" id="UP000000560">
    <property type="component" value="Chromosome VIII"/>
</dbReference>
<dbReference type="GO" id="GO:0005934">
    <property type="term" value="C:cellular bud tip"/>
    <property type="evidence" value="ECO:0007669"/>
    <property type="project" value="EnsemblFungi"/>
</dbReference>
<dbReference type="GO" id="GO:0005737">
    <property type="term" value="C:cytoplasm"/>
    <property type="evidence" value="ECO:0000318"/>
    <property type="project" value="GO_Central"/>
</dbReference>
<dbReference type="GO" id="GO:0022626">
    <property type="term" value="C:cytosolic ribosome"/>
    <property type="evidence" value="ECO:0007669"/>
    <property type="project" value="EnsemblFungi"/>
</dbReference>
<dbReference type="GO" id="GO:0010008">
    <property type="term" value="C:endosome membrane"/>
    <property type="evidence" value="ECO:0007669"/>
    <property type="project" value="EnsemblFungi"/>
</dbReference>
<dbReference type="GO" id="GO:0005794">
    <property type="term" value="C:Golgi apparatus"/>
    <property type="evidence" value="ECO:0007669"/>
    <property type="project" value="EnsemblFungi"/>
</dbReference>
<dbReference type="GO" id="GO:0005634">
    <property type="term" value="C:nucleus"/>
    <property type="evidence" value="ECO:0007669"/>
    <property type="project" value="EnsemblFungi"/>
</dbReference>
<dbReference type="GO" id="GO:1990306">
    <property type="term" value="C:RSP5-BUL ubiquitin ligase complex"/>
    <property type="evidence" value="ECO:0007669"/>
    <property type="project" value="EnsemblFungi"/>
</dbReference>
<dbReference type="GO" id="GO:0000151">
    <property type="term" value="C:ubiquitin ligase complex"/>
    <property type="evidence" value="ECO:0007669"/>
    <property type="project" value="EnsemblFungi"/>
</dbReference>
<dbReference type="GO" id="GO:0035091">
    <property type="term" value="F:phosphatidylinositol binding"/>
    <property type="evidence" value="ECO:0007669"/>
    <property type="project" value="EnsemblFungi"/>
</dbReference>
<dbReference type="GO" id="GO:0043130">
    <property type="term" value="F:ubiquitin binding"/>
    <property type="evidence" value="ECO:0007669"/>
    <property type="project" value="EnsemblFungi"/>
</dbReference>
<dbReference type="GO" id="GO:0061630">
    <property type="term" value="F:ubiquitin protein ligase activity"/>
    <property type="evidence" value="ECO:0000318"/>
    <property type="project" value="GO_Central"/>
</dbReference>
<dbReference type="GO" id="GO:0004842">
    <property type="term" value="F:ubiquitin-protein transferase activity"/>
    <property type="evidence" value="ECO:0000314"/>
    <property type="project" value="UniProtKB"/>
</dbReference>
<dbReference type="GO" id="GO:0034450">
    <property type="term" value="F:ubiquitin-ubiquitin ligase activity"/>
    <property type="evidence" value="ECO:0007669"/>
    <property type="project" value="EnsemblFungi"/>
</dbReference>
<dbReference type="GO" id="GO:0034605">
    <property type="term" value="P:cellular response to heat"/>
    <property type="evidence" value="ECO:0007669"/>
    <property type="project" value="EnsemblFungi"/>
</dbReference>
<dbReference type="GO" id="GO:1903577">
    <property type="term" value="P:cellular response to L-arginine"/>
    <property type="evidence" value="ECO:0007669"/>
    <property type="project" value="EnsemblFungi"/>
</dbReference>
<dbReference type="GO" id="GO:0006325">
    <property type="term" value="P:chromatin organization"/>
    <property type="evidence" value="ECO:0007669"/>
    <property type="project" value="EnsemblFungi"/>
</dbReference>
<dbReference type="GO" id="GO:0010994">
    <property type="term" value="P:free ubiquitin chain polymerization"/>
    <property type="evidence" value="ECO:0007669"/>
    <property type="project" value="EnsemblFungi"/>
</dbReference>
<dbReference type="GO" id="GO:0072671">
    <property type="term" value="P:mitochondria-associated ubiquitin-dependent protein catabolic process"/>
    <property type="evidence" value="ECO:0007669"/>
    <property type="project" value="EnsemblFungi"/>
</dbReference>
<dbReference type="GO" id="GO:0007005">
    <property type="term" value="P:mitochondrion organization"/>
    <property type="evidence" value="ECO:0007669"/>
    <property type="project" value="EnsemblFungi"/>
</dbReference>
<dbReference type="GO" id="GO:0070651">
    <property type="term" value="P:nonfunctional rRNA decay"/>
    <property type="evidence" value="ECO:0007669"/>
    <property type="project" value="EnsemblFungi"/>
</dbReference>
<dbReference type="GO" id="GO:0016973">
    <property type="term" value="P:poly(A)+ mRNA export from nucleus"/>
    <property type="evidence" value="ECO:0007669"/>
    <property type="project" value="EnsemblFungi"/>
</dbReference>
<dbReference type="GO" id="GO:0045723">
    <property type="term" value="P:positive regulation of fatty acid biosynthetic process"/>
    <property type="evidence" value="ECO:0007669"/>
    <property type="project" value="EnsemblFungi"/>
</dbReference>
<dbReference type="GO" id="GO:0032436">
    <property type="term" value="P:positive regulation of proteasomal ubiquitin-dependent protein catabolic process"/>
    <property type="evidence" value="ECO:0007669"/>
    <property type="project" value="EnsemblFungi"/>
</dbReference>
<dbReference type="GO" id="GO:0048260">
    <property type="term" value="P:positive regulation of receptor-mediated endocytosis"/>
    <property type="evidence" value="ECO:0007669"/>
    <property type="project" value="EnsemblFungi"/>
</dbReference>
<dbReference type="GO" id="GO:0045944">
    <property type="term" value="P:positive regulation of transcription by RNA polymerase II"/>
    <property type="evidence" value="ECO:0007669"/>
    <property type="project" value="EnsemblFungi"/>
</dbReference>
<dbReference type="GO" id="GO:0070534">
    <property type="term" value="P:protein K63-linked ubiquitination"/>
    <property type="evidence" value="ECO:0007669"/>
    <property type="project" value="EnsemblFungi"/>
</dbReference>
<dbReference type="GO" id="GO:0006515">
    <property type="term" value="P:protein quality control for misfolded or incompletely synthesized proteins"/>
    <property type="evidence" value="ECO:0007669"/>
    <property type="project" value="EnsemblFungi"/>
</dbReference>
<dbReference type="GO" id="GO:0043328">
    <property type="term" value="P:protein transport to vacuole involved in ubiquitin-dependent protein catabolic process via the multivesicular body sorting pathway"/>
    <property type="evidence" value="ECO:0000314"/>
    <property type="project" value="UniProtKB"/>
</dbReference>
<dbReference type="GO" id="GO:0016567">
    <property type="term" value="P:protein ubiquitination"/>
    <property type="evidence" value="ECO:0000314"/>
    <property type="project" value="UniProtKB"/>
</dbReference>
<dbReference type="GO" id="GO:0032956">
    <property type="term" value="P:regulation of actin cytoskeleton organization"/>
    <property type="evidence" value="ECO:0007669"/>
    <property type="project" value="EnsemblFungi"/>
</dbReference>
<dbReference type="GO" id="GO:0010794">
    <property type="term" value="P:regulation of dolichol biosynthetic process"/>
    <property type="evidence" value="ECO:0007669"/>
    <property type="project" value="EnsemblFungi"/>
</dbReference>
<dbReference type="GO" id="GO:0032443">
    <property type="term" value="P:regulation of ergosterol biosynthetic process"/>
    <property type="evidence" value="ECO:0007669"/>
    <property type="project" value="EnsemblFungi"/>
</dbReference>
<dbReference type="GO" id="GO:0010793">
    <property type="term" value="P:regulation of mRNA export from nucleus"/>
    <property type="evidence" value="ECO:0007669"/>
    <property type="project" value="EnsemblFungi"/>
</dbReference>
<dbReference type="GO" id="GO:0006808">
    <property type="term" value="P:regulation of nitrogen utilization"/>
    <property type="evidence" value="ECO:0007669"/>
    <property type="project" value="EnsemblFungi"/>
</dbReference>
<dbReference type="GO" id="GO:0019220">
    <property type="term" value="P:regulation of phosphate metabolic process"/>
    <property type="evidence" value="ECO:0007669"/>
    <property type="project" value="EnsemblFungi"/>
</dbReference>
<dbReference type="GO" id="GO:0032880">
    <property type="term" value="P:regulation of protein localization"/>
    <property type="evidence" value="ECO:0007669"/>
    <property type="project" value="EnsemblFungi"/>
</dbReference>
<dbReference type="GO" id="GO:2000203">
    <property type="term" value="P:regulation of ribosomal large subunit export from nucleus"/>
    <property type="evidence" value="ECO:0007669"/>
    <property type="project" value="EnsemblFungi"/>
</dbReference>
<dbReference type="GO" id="GO:2000232">
    <property type="term" value="P:regulation of rRNA processing"/>
    <property type="evidence" value="ECO:0007669"/>
    <property type="project" value="EnsemblFungi"/>
</dbReference>
<dbReference type="GO" id="GO:2000238">
    <property type="term" value="P:regulation of tRNA export from nucleus"/>
    <property type="evidence" value="ECO:0007669"/>
    <property type="project" value="EnsemblFungi"/>
</dbReference>
<dbReference type="GO" id="GO:2000235">
    <property type="term" value="P:regulation of tRNA processing"/>
    <property type="evidence" value="ECO:0007669"/>
    <property type="project" value="EnsemblFungi"/>
</dbReference>
<dbReference type="GO" id="GO:0010795">
    <property type="term" value="P:regulation of ubiquinone biosynthetic process"/>
    <property type="evidence" value="ECO:0007669"/>
    <property type="project" value="EnsemblFungi"/>
</dbReference>
<dbReference type="GO" id="GO:0034517">
    <property type="term" value="P:ribophagy"/>
    <property type="evidence" value="ECO:0007669"/>
    <property type="project" value="EnsemblFungi"/>
</dbReference>
<dbReference type="GO" id="GO:0070086">
    <property type="term" value="P:ubiquitin-dependent endocytosis"/>
    <property type="evidence" value="ECO:0007669"/>
    <property type="project" value="EnsemblFungi"/>
</dbReference>
<dbReference type="GO" id="GO:0006511">
    <property type="term" value="P:ubiquitin-dependent protein catabolic process"/>
    <property type="evidence" value="ECO:0000318"/>
    <property type="project" value="GO_Central"/>
</dbReference>
<dbReference type="CDD" id="cd08382">
    <property type="entry name" value="C2_Smurf-like"/>
    <property type="match status" value="1"/>
</dbReference>
<dbReference type="CDD" id="cd00078">
    <property type="entry name" value="HECTc"/>
    <property type="match status" value="1"/>
</dbReference>
<dbReference type="CDD" id="cd00201">
    <property type="entry name" value="WW"/>
    <property type="match status" value="3"/>
</dbReference>
<dbReference type="FunFam" id="2.20.70.10:FF:000011">
    <property type="entry name" value="E3 ubiquitin-protein ligase"/>
    <property type="match status" value="1"/>
</dbReference>
<dbReference type="FunFam" id="2.20.70.10:FF:000017">
    <property type="entry name" value="E3 ubiquitin-protein ligase"/>
    <property type="match status" value="1"/>
</dbReference>
<dbReference type="FunFam" id="2.20.70.10:FF:000053">
    <property type="entry name" value="E3 ubiquitin-protein ligase"/>
    <property type="match status" value="1"/>
</dbReference>
<dbReference type="FunFam" id="2.60.40.150:FF:000074">
    <property type="entry name" value="E3 ubiquitin-protein ligase"/>
    <property type="match status" value="1"/>
</dbReference>
<dbReference type="FunFam" id="3.90.1750.10:FF:000005">
    <property type="entry name" value="E3 ubiquitin-protein ligase"/>
    <property type="match status" value="1"/>
</dbReference>
<dbReference type="FunFam" id="3.30.2160.10:FF:000001">
    <property type="entry name" value="E3 ubiquitin-protein ligase NEDD4-like"/>
    <property type="match status" value="1"/>
</dbReference>
<dbReference type="FunFam" id="3.30.2410.10:FF:000001">
    <property type="entry name" value="E3 ubiquitin-protein ligase NEDD4-like"/>
    <property type="match status" value="1"/>
</dbReference>
<dbReference type="Gene3D" id="2.20.70.10">
    <property type="match status" value="2"/>
</dbReference>
<dbReference type="Gene3D" id="2.60.40.150">
    <property type="entry name" value="C2 domain"/>
    <property type="match status" value="1"/>
</dbReference>
<dbReference type="Gene3D" id="3.30.2160.10">
    <property type="entry name" value="Hect, E3 ligase catalytic domain"/>
    <property type="match status" value="1"/>
</dbReference>
<dbReference type="Gene3D" id="3.30.2410.10">
    <property type="entry name" value="Hect, E3 ligase catalytic domain"/>
    <property type="match status" value="1"/>
</dbReference>
<dbReference type="Gene3D" id="3.90.1750.10">
    <property type="entry name" value="Hect, E3 ligase catalytic domains"/>
    <property type="match status" value="1"/>
</dbReference>
<dbReference type="InterPro" id="IPR000008">
    <property type="entry name" value="C2_dom"/>
</dbReference>
<dbReference type="InterPro" id="IPR035892">
    <property type="entry name" value="C2_domain_sf"/>
</dbReference>
<dbReference type="InterPro" id="IPR024928">
    <property type="entry name" value="E3_ub_ligase_SMURF1"/>
</dbReference>
<dbReference type="InterPro" id="IPR050409">
    <property type="entry name" value="E3_ubiq-protein_ligase"/>
</dbReference>
<dbReference type="InterPro" id="IPR000569">
    <property type="entry name" value="HECT_dom"/>
</dbReference>
<dbReference type="InterPro" id="IPR035983">
    <property type="entry name" value="Hect_E3_ubiquitin_ligase"/>
</dbReference>
<dbReference type="InterPro" id="IPR001202">
    <property type="entry name" value="WW_dom"/>
</dbReference>
<dbReference type="InterPro" id="IPR036020">
    <property type="entry name" value="WW_dom_sf"/>
</dbReference>
<dbReference type="PANTHER" id="PTHR11254:SF440">
    <property type="entry name" value="E3 UBIQUITIN-PROTEIN LIGASE NEDD-4"/>
    <property type="match status" value="1"/>
</dbReference>
<dbReference type="PANTHER" id="PTHR11254">
    <property type="entry name" value="HECT DOMAIN UBIQUITIN-PROTEIN LIGASE"/>
    <property type="match status" value="1"/>
</dbReference>
<dbReference type="Pfam" id="PF00168">
    <property type="entry name" value="C2"/>
    <property type="match status" value="1"/>
</dbReference>
<dbReference type="Pfam" id="PF00632">
    <property type="entry name" value="HECT"/>
    <property type="match status" value="1"/>
</dbReference>
<dbReference type="Pfam" id="PF00397">
    <property type="entry name" value="WW"/>
    <property type="match status" value="3"/>
</dbReference>
<dbReference type="PIRSF" id="PIRSF001569">
    <property type="entry name" value="E3_ub_ligase_SMURF1"/>
    <property type="match status" value="1"/>
</dbReference>
<dbReference type="SMART" id="SM00239">
    <property type="entry name" value="C2"/>
    <property type="match status" value="1"/>
</dbReference>
<dbReference type="SMART" id="SM00119">
    <property type="entry name" value="HECTc"/>
    <property type="match status" value="1"/>
</dbReference>
<dbReference type="SMART" id="SM00456">
    <property type="entry name" value="WW"/>
    <property type="match status" value="3"/>
</dbReference>
<dbReference type="SUPFAM" id="SSF49562">
    <property type="entry name" value="C2 domain (Calcium/lipid-binding domain, CaLB)"/>
    <property type="match status" value="1"/>
</dbReference>
<dbReference type="SUPFAM" id="SSF56204">
    <property type="entry name" value="Hect, E3 ligase catalytic domain"/>
    <property type="match status" value="1"/>
</dbReference>
<dbReference type="SUPFAM" id="SSF51045">
    <property type="entry name" value="WW domain"/>
    <property type="match status" value="3"/>
</dbReference>
<dbReference type="PROSITE" id="PS50004">
    <property type="entry name" value="C2"/>
    <property type="match status" value="1"/>
</dbReference>
<dbReference type="PROSITE" id="PS50237">
    <property type="entry name" value="HECT"/>
    <property type="match status" value="1"/>
</dbReference>
<dbReference type="PROSITE" id="PS01159">
    <property type="entry name" value="WW_DOMAIN_1"/>
    <property type="match status" value="3"/>
</dbReference>
<dbReference type="PROSITE" id="PS50020">
    <property type="entry name" value="WW_DOMAIN_2"/>
    <property type="match status" value="3"/>
</dbReference>
<gene>
    <name type="primary">hulA</name>
    <name type="ORF">AN1339</name>
</gene>
<evidence type="ECO:0000250" key="1">
    <source>
        <dbReference type="UniProtKB" id="P39940"/>
    </source>
</evidence>
<evidence type="ECO:0000255" key="2">
    <source>
        <dbReference type="PROSITE-ProRule" id="PRU00041"/>
    </source>
</evidence>
<evidence type="ECO:0000255" key="3">
    <source>
        <dbReference type="PROSITE-ProRule" id="PRU00104"/>
    </source>
</evidence>
<evidence type="ECO:0000255" key="4">
    <source>
        <dbReference type="PROSITE-ProRule" id="PRU00224"/>
    </source>
</evidence>
<evidence type="ECO:0000256" key="5">
    <source>
        <dbReference type="SAM" id="MobiDB-lite"/>
    </source>
</evidence>
<evidence type="ECO:0000269" key="6">
    <source>
    </source>
</evidence>
<evidence type="ECO:0000269" key="7">
    <source>
    </source>
</evidence>
<evidence type="ECO:0000305" key="8"/>
<keyword id="KW-0963">Cytoplasm</keyword>
<keyword id="KW-1185">Reference proteome</keyword>
<keyword id="KW-0677">Repeat</keyword>
<keyword id="KW-0808">Transferase</keyword>
<keyword id="KW-0833">Ubl conjugation pathway</keyword>
<comment type="function">
    <text evidence="7">E3 ubiquitin-protein ligase which accepts ubiquitin from an E2 ubiquitin-conjugating enzyme in the form of a thioester and then directly transfers the ubiquitin to targeted substrates. Probably involved in the regulatory network controlling carbon source utilization. Ubiquitinates 'Lys-528' of the uric acid/xanthine transporter uapA at the cell membrane, leading to its internalization, sorting into the endosomal pathway to the vacuolar lumen where it is eventually degraded.</text>
</comment>
<comment type="catalytic activity">
    <reaction>
        <text>S-ubiquitinyl-[E2 ubiquitin-conjugating enzyme]-L-cysteine + [acceptor protein]-L-lysine = [E2 ubiquitin-conjugating enzyme]-L-cysteine + N(6)-ubiquitinyl-[acceptor protein]-L-lysine.</text>
        <dbReference type="EC" id="2.3.2.26"/>
    </reaction>
</comment>
<comment type="pathway">
    <text>Protein modification; protein ubiquitination.</text>
</comment>
<comment type="subunit">
    <text evidence="6">Interacts with apyA and creD.</text>
</comment>
<comment type="subcellular location">
    <subcellularLocation>
        <location evidence="1">Cytoplasm</location>
    </subcellularLocation>
</comment>
<comment type="similarity">
    <text evidence="8">Belongs to the RSP5/NEDD4 family.</text>
</comment>
<accession>Q5BDP1</accession>
<accession>C8VS40</accession>
<organism>
    <name type="scientific">Emericella nidulans (strain FGSC A4 / ATCC 38163 / CBS 112.46 / NRRL 194 / M139)</name>
    <name type="common">Aspergillus nidulans</name>
    <dbReference type="NCBI Taxonomy" id="227321"/>
    <lineage>
        <taxon>Eukaryota</taxon>
        <taxon>Fungi</taxon>
        <taxon>Dikarya</taxon>
        <taxon>Ascomycota</taxon>
        <taxon>Pezizomycotina</taxon>
        <taxon>Eurotiomycetes</taxon>
        <taxon>Eurotiomycetidae</taxon>
        <taxon>Eurotiales</taxon>
        <taxon>Aspergillaceae</taxon>
        <taxon>Aspergillus</taxon>
        <taxon>Aspergillus subgen. Nidulantes</taxon>
    </lineage>
</organism>
<reference key="1">
    <citation type="journal article" date="2005" name="Nature">
        <title>Sequencing of Aspergillus nidulans and comparative analysis with A. fumigatus and A. oryzae.</title>
        <authorList>
            <person name="Galagan J.E."/>
            <person name="Calvo S.E."/>
            <person name="Cuomo C."/>
            <person name="Ma L.-J."/>
            <person name="Wortman J.R."/>
            <person name="Batzoglou S."/>
            <person name="Lee S.-I."/>
            <person name="Bastuerkmen M."/>
            <person name="Spevak C.C."/>
            <person name="Clutterbuck J."/>
            <person name="Kapitonov V."/>
            <person name="Jurka J."/>
            <person name="Scazzocchio C."/>
            <person name="Farman M.L."/>
            <person name="Butler J."/>
            <person name="Purcell S."/>
            <person name="Harris S."/>
            <person name="Braus G.H."/>
            <person name="Draht O."/>
            <person name="Busch S."/>
            <person name="D'Enfert C."/>
            <person name="Bouchier C."/>
            <person name="Goldman G.H."/>
            <person name="Bell-Pedersen D."/>
            <person name="Griffiths-Jones S."/>
            <person name="Doonan J.H."/>
            <person name="Yu J."/>
            <person name="Vienken K."/>
            <person name="Pain A."/>
            <person name="Freitag M."/>
            <person name="Selker E.U."/>
            <person name="Archer D.B."/>
            <person name="Penalva M.A."/>
            <person name="Oakley B.R."/>
            <person name="Momany M."/>
            <person name="Tanaka T."/>
            <person name="Kumagai T."/>
            <person name="Asai K."/>
            <person name="Machida M."/>
            <person name="Nierman W.C."/>
            <person name="Denning D.W."/>
            <person name="Caddick M.X."/>
            <person name="Hynes M."/>
            <person name="Paoletti M."/>
            <person name="Fischer R."/>
            <person name="Miller B.L."/>
            <person name="Dyer P.S."/>
            <person name="Sachs M.S."/>
            <person name="Osmani S.A."/>
            <person name="Birren B.W."/>
        </authorList>
    </citation>
    <scope>NUCLEOTIDE SEQUENCE [LARGE SCALE GENOMIC DNA]</scope>
    <source>
        <strain>FGSC A4 / ATCC 38163 / CBS 112.46 / NRRL 194 / M139</strain>
    </source>
</reference>
<reference key="2">
    <citation type="journal article" date="2009" name="Fungal Genet. Biol.">
        <title>The 2008 update of the Aspergillus nidulans genome annotation: a community effort.</title>
        <authorList>
            <person name="Wortman J.R."/>
            <person name="Gilsenan J.M."/>
            <person name="Joardar V."/>
            <person name="Deegan J."/>
            <person name="Clutterbuck J."/>
            <person name="Andersen M.R."/>
            <person name="Archer D."/>
            <person name="Bencina M."/>
            <person name="Braus G."/>
            <person name="Coutinho P."/>
            <person name="von Dohren H."/>
            <person name="Doonan J."/>
            <person name="Driessen A.J."/>
            <person name="Durek P."/>
            <person name="Espeso E."/>
            <person name="Fekete E."/>
            <person name="Flipphi M."/>
            <person name="Estrada C.G."/>
            <person name="Geysens S."/>
            <person name="Goldman G."/>
            <person name="de Groot P.W."/>
            <person name="Hansen K."/>
            <person name="Harris S.D."/>
            <person name="Heinekamp T."/>
            <person name="Helmstaedt K."/>
            <person name="Henrissat B."/>
            <person name="Hofmann G."/>
            <person name="Homan T."/>
            <person name="Horio T."/>
            <person name="Horiuchi H."/>
            <person name="James S."/>
            <person name="Jones M."/>
            <person name="Karaffa L."/>
            <person name="Karanyi Z."/>
            <person name="Kato M."/>
            <person name="Keller N."/>
            <person name="Kelly D.E."/>
            <person name="Kiel J.A."/>
            <person name="Kim J.M."/>
            <person name="van der Klei I.J."/>
            <person name="Klis F.M."/>
            <person name="Kovalchuk A."/>
            <person name="Krasevec N."/>
            <person name="Kubicek C.P."/>
            <person name="Liu B."/>
            <person name="Maccabe A."/>
            <person name="Meyer V."/>
            <person name="Mirabito P."/>
            <person name="Miskei M."/>
            <person name="Mos M."/>
            <person name="Mullins J."/>
            <person name="Nelson D.R."/>
            <person name="Nielsen J."/>
            <person name="Oakley B.R."/>
            <person name="Osmani S.A."/>
            <person name="Pakula T."/>
            <person name="Paszewski A."/>
            <person name="Paulsen I."/>
            <person name="Pilsyk S."/>
            <person name="Pocsi I."/>
            <person name="Punt P.J."/>
            <person name="Ram A.F."/>
            <person name="Ren Q."/>
            <person name="Robellet X."/>
            <person name="Robson G."/>
            <person name="Seiboth B."/>
            <person name="van Solingen P."/>
            <person name="Specht T."/>
            <person name="Sun J."/>
            <person name="Taheri-Talesh N."/>
            <person name="Takeshita N."/>
            <person name="Ussery D."/>
            <person name="vanKuyk P.A."/>
            <person name="Visser H."/>
            <person name="van de Vondervoort P.J."/>
            <person name="de Vries R.P."/>
            <person name="Walton J."/>
            <person name="Xiang X."/>
            <person name="Xiong Y."/>
            <person name="Zeng A.P."/>
            <person name="Brandt B.W."/>
            <person name="Cornell M.J."/>
            <person name="van den Hondel C.A."/>
            <person name="Visser J."/>
            <person name="Oliver S.G."/>
            <person name="Turner G."/>
        </authorList>
    </citation>
    <scope>GENOME REANNOTATION</scope>
    <source>
        <strain>FGSC A4 / ATCC 38163 / CBS 112.46 / NRRL 194 / M139</strain>
    </source>
</reference>
<reference key="3">
    <citation type="journal article" date="2004" name="Mol. Microbiol.">
        <title>A role for creD, a carbon catabolite repression gene from Aspergillus nidulans, in ubiquitination.</title>
        <authorList>
            <person name="Boase N.A."/>
            <person name="Kelly J.M."/>
        </authorList>
    </citation>
    <scope>INTERACTION WITH APYA AND CRED</scope>
</reference>
<reference key="4">
    <citation type="journal article" date="2010" name="Mol. Microbiol.">
        <title>Transport-dependent endocytosis and turnover of a uric acid-xanthine permease.</title>
        <authorList>
            <person name="Gournas C."/>
            <person name="Amillis S."/>
            <person name="Vlanti A."/>
            <person name="Diallinas G."/>
        </authorList>
    </citation>
    <scope>FUNCTION</scope>
</reference>
<protein>
    <recommendedName>
        <fullName>E3 ubiquitin-protein ligase RSP5</fullName>
        <ecNumber>2.3.2.26</ecNumber>
    </recommendedName>
    <alternativeName>
        <fullName>HECT ubiquitin ligase A</fullName>
    </alternativeName>
    <alternativeName>
        <fullName>HECT-type E3 ubiquitin transferase RSP5</fullName>
    </alternativeName>
</protein>